<feature type="chain" id="PRO_0000267091" description="Enolase">
    <location>
        <begin position="1"/>
        <end position="430"/>
    </location>
</feature>
<feature type="active site" description="Proton donor" evidence="1">
    <location>
        <position position="205"/>
    </location>
</feature>
<feature type="active site" description="Proton acceptor" evidence="1">
    <location>
        <position position="337"/>
    </location>
</feature>
<feature type="binding site" evidence="1">
    <location>
        <position position="163"/>
    </location>
    <ligand>
        <name>(2R)-2-phosphoglycerate</name>
        <dbReference type="ChEBI" id="CHEBI:58289"/>
    </ligand>
</feature>
<feature type="binding site" evidence="1">
    <location>
        <position position="242"/>
    </location>
    <ligand>
        <name>Mg(2+)</name>
        <dbReference type="ChEBI" id="CHEBI:18420"/>
    </ligand>
</feature>
<feature type="binding site" evidence="1">
    <location>
        <position position="285"/>
    </location>
    <ligand>
        <name>Mg(2+)</name>
        <dbReference type="ChEBI" id="CHEBI:18420"/>
    </ligand>
</feature>
<feature type="binding site" evidence="1">
    <location>
        <position position="312"/>
    </location>
    <ligand>
        <name>Mg(2+)</name>
        <dbReference type="ChEBI" id="CHEBI:18420"/>
    </ligand>
</feature>
<feature type="binding site" evidence="1">
    <location>
        <position position="337"/>
    </location>
    <ligand>
        <name>(2R)-2-phosphoglycerate</name>
        <dbReference type="ChEBI" id="CHEBI:58289"/>
    </ligand>
</feature>
<feature type="binding site" evidence="1">
    <location>
        <position position="366"/>
    </location>
    <ligand>
        <name>(2R)-2-phosphoglycerate</name>
        <dbReference type="ChEBI" id="CHEBI:58289"/>
    </ligand>
</feature>
<feature type="binding site" evidence="1">
    <location>
        <position position="367"/>
    </location>
    <ligand>
        <name>(2R)-2-phosphoglycerate</name>
        <dbReference type="ChEBI" id="CHEBI:58289"/>
    </ligand>
</feature>
<feature type="binding site" evidence="1">
    <location>
        <position position="388"/>
    </location>
    <ligand>
        <name>(2R)-2-phosphoglycerate</name>
        <dbReference type="ChEBI" id="CHEBI:58289"/>
    </ligand>
</feature>
<reference key="1">
    <citation type="submission" date="2006-03" db="EMBL/GenBank/DDBJ databases">
        <title>Complete sequence of Rhodopseudomonas palustris BisB18.</title>
        <authorList>
            <consortium name="US DOE Joint Genome Institute"/>
            <person name="Copeland A."/>
            <person name="Lucas S."/>
            <person name="Lapidus A."/>
            <person name="Barry K."/>
            <person name="Detter J.C."/>
            <person name="Glavina del Rio T."/>
            <person name="Hammon N."/>
            <person name="Israni S."/>
            <person name="Dalin E."/>
            <person name="Tice H."/>
            <person name="Pitluck S."/>
            <person name="Chain P."/>
            <person name="Malfatti S."/>
            <person name="Shin M."/>
            <person name="Vergez L."/>
            <person name="Schmutz J."/>
            <person name="Larimer F."/>
            <person name="Land M."/>
            <person name="Hauser L."/>
            <person name="Pelletier D.A."/>
            <person name="Kyrpides N."/>
            <person name="Anderson I."/>
            <person name="Oda Y."/>
            <person name="Harwood C.S."/>
            <person name="Richardson P."/>
        </authorList>
    </citation>
    <scope>NUCLEOTIDE SEQUENCE [LARGE SCALE GENOMIC DNA]</scope>
    <source>
        <strain>BisB18</strain>
    </source>
</reference>
<dbReference type="EC" id="4.2.1.11" evidence="1"/>
<dbReference type="EMBL" id="CP000301">
    <property type="protein sequence ID" value="ABD88034.1"/>
    <property type="molecule type" value="Genomic_DNA"/>
</dbReference>
<dbReference type="SMR" id="Q215A2"/>
<dbReference type="STRING" id="316056.RPC_2483"/>
<dbReference type="KEGG" id="rpc:RPC_2483"/>
<dbReference type="eggNOG" id="COG0148">
    <property type="taxonomic scope" value="Bacteria"/>
</dbReference>
<dbReference type="HOGENOM" id="CLU_031223_2_1_5"/>
<dbReference type="OrthoDB" id="9804716at2"/>
<dbReference type="UniPathway" id="UPA00109">
    <property type="reaction ID" value="UER00187"/>
</dbReference>
<dbReference type="GO" id="GO:0009986">
    <property type="term" value="C:cell surface"/>
    <property type="evidence" value="ECO:0007669"/>
    <property type="project" value="UniProtKB-SubCell"/>
</dbReference>
<dbReference type="GO" id="GO:0005576">
    <property type="term" value="C:extracellular region"/>
    <property type="evidence" value="ECO:0007669"/>
    <property type="project" value="UniProtKB-SubCell"/>
</dbReference>
<dbReference type="GO" id="GO:0000015">
    <property type="term" value="C:phosphopyruvate hydratase complex"/>
    <property type="evidence" value="ECO:0007669"/>
    <property type="project" value="InterPro"/>
</dbReference>
<dbReference type="GO" id="GO:0000287">
    <property type="term" value="F:magnesium ion binding"/>
    <property type="evidence" value="ECO:0007669"/>
    <property type="project" value="UniProtKB-UniRule"/>
</dbReference>
<dbReference type="GO" id="GO:0004634">
    <property type="term" value="F:phosphopyruvate hydratase activity"/>
    <property type="evidence" value="ECO:0007669"/>
    <property type="project" value="UniProtKB-UniRule"/>
</dbReference>
<dbReference type="GO" id="GO:0006096">
    <property type="term" value="P:glycolytic process"/>
    <property type="evidence" value="ECO:0007669"/>
    <property type="project" value="UniProtKB-UniRule"/>
</dbReference>
<dbReference type="CDD" id="cd03313">
    <property type="entry name" value="enolase"/>
    <property type="match status" value="1"/>
</dbReference>
<dbReference type="FunFam" id="3.20.20.120:FF:000001">
    <property type="entry name" value="Enolase"/>
    <property type="match status" value="1"/>
</dbReference>
<dbReference type="FunFam" id="3.30.390.10:FF:000001">
    <property type="entry name" value="Enolase"/>
    <property type="match status" value="1"/>
</dbReference>
<dbReference type="Gene3D" id="3.20.20.120">
    <property type="entry name" value="Enolase-like C-terminal domain"/>
    <property type="match status" value="1"/>
</dbReference>
<dbReference type="Gene3D" id="3.30.390.10">
    <property type="entry name" value="Enolase-like, N-terminal domain"/>
    <property type="match status" value="1"/>
</dbReference>
<dbReference type="HAMAP" id="MF_00318">
    <property type="entry name" value="Enolase"/>
    <property type="match status" value="1"/>
</dbReference>
<dbReference type="InterPro" id="IPR000941">
    <property type="entry name" value="Enolase"/>
</dbReference>
<dbReference type="InterPro" id="IPR036849">
    <property type="entry name" value="Enolase-like_C_sf"/>
</dbReference>
<dbReference type="InterPro" id="IPR029017">
    <property type="entry name" value="Enolase-like_N"/>
</dbReference>
<dbReference type="InterPro" id="IPR020810">
    <property type="entry name" value="Enolase_C"/>
</dbReference>
<dbReference type="InterPro" id="IPR020809">
    <property type="entry name" value="Enolase_CS"/>
</dbReference>
<dbReference type="InterPro" id="IPR020811">
    <property type="entry name" value="Enolase_N"/>
</dbReference>
<dbReference type="NCBIfam" id="TIGR01060">
    <property type="entry name" value="eno"/>
    <property type="match status" value="1"/>
</dbReference>
<dbReference type="PANTHER" id="PTHR11902">
    <property type="entry name" value="ENOLASE"/>
    <property type="match status" value="1"/>
</dbReference>
<dbReference type="PANTHER" id="PTHR11902:SF1">
    <property type="entry name" value="ENOLASE"/>
    <property type="match status" value="1"/>
</dbReference>
<dbReference type="Pfam" id="PF00113">
    <property type="entry name" value="Enolase_C"/>
    <property type="match status" value="1"/>
</dbReference>
<dbReference type="Pfam" id="PF03952">
    <property type="entry name" value="Enolase_N"/>
    <property type="match status" value="1"/>
</dbReference>
<dbReference type="PIRSF" id="PIRSF001400">
    <property type="entry name" value="Enolase"/>
    <property type="match status" value="1"/>
</dbReference>
<dbReference type="PRINTS" id="PR00148">
    <property type="entry name" value="ENOLASE"/>
</dbReference>
<dbReference type="SFLD" id="SFLDS00001">
    <property type="entry name" value="Enolase"/>
    <property type="match status" value="1"/>
</dbReference>
<dbReference type="SFLD" id="SFLDF00002">
    <property type="entry name" value="enolase"/>
    <property type="match status" value="1"/>
</dbReference>
<dbReference type="SMART" id="SM01192">
    <property type="entry name" value="Enolase_C"/>
    <property type="match status" value="1"/>
</dbReference>
<dbReference type="SMART" id="SM01193">
    <property type="entry name" value="Enolase_N"/>
    <property type="match status" value="1"/>
</dbReference>
<dbReference type="SUPFAM" id="SSF51604">
    <property type="entry name" value="Enolase C-terminal domain-like"/>
    <property type="match status" value="1"/>
</dbReference>
<dbReference type="SUPFAM" id="SSF54826">
    <property type="entry name" value="Enolase N-terminal domain-like"/>
    <property type="match status" value="1"/>
</dbReference>
<dbReference type="PROSITE" id="PS00164">
    <property type="entry name" value="ENOLASE"/>
    <property type="match status" value="1"/>
</dbReference>
<accession>Q215A2</accession>
<sequence length="430" mass="46064">MTAIVDIIGREILDSRGNPTVEVDVVLEDGAVGRAAVPSGASTGAHEAVELRDGDKERYFGKGVLKAVEAVNGEIFDALGGMDAEQQVQIDEIMIGLDGTPNKSRLGANAILGVSLAVAKAAAESFDMPLYRYVGGTSARTLPVPMMNIINGGVHADNPIDFQEFMIMPIGAPSFSEALRMGAEVFHTLKKSLHDEGHNTNVGDEGGFAPNLKSADEALTYIMRAIEKAGYKPGEDIALALDPASSEFFKNGSYVYEGEKKARNIDAQAKYLAELVGRYPIVSIEDGMAEDDFEGWKQVTELIGDKCQLVGDDLFVTNVERLSDGIKNGRANSILIKVNQIGTLTETLAAIEMAYKAGYTAVMSHRSGETEDSTIADLAVASNCGQIKTGSLARADRTAKYNQLLRIEQELGGQAKFAGRAALKAFRYLD</sequence>
<evidence type="ECO:0000255" key="1">
    <source>
        <dbReference type="HAMAP-Rule" id="MF_00318"/>
    </source>
</evidence>
<keyword id="KW-0963">Cytoplasm</keyword>
<keyword id="KW-0324">Glycolysis</keyword>
<keyword id="KW-0456">Lyase</keyword>
<keyword id="KW-0460">Magnesium</keyword>
<keyword id="KW-0479">Metal-binding</keyword>
<keyword id="KW-0964">Secreted</keyword>
<gene>
    <name evidence="1" type="primary">eno</name>
    <name type="ordered locus">RPC_2483</name>
</gene>
<proteinExistence type="inferred from homology"/>
<comment type="function">
    <text evidence="1">Catalyzes the reversible conversion of 2-phosphoglycerate (2-PG) into phosphoenolpyruvate (PEP). It is essential for the degradation of carbohydrates via glycolysis.</text>
</comment>
<comment type="catalytic activity">
    <reaction evidence="1">
        <text>(2R)-2-phosphoglycerate = phosphoenolpyruvate + H2O</text>
        <dbReference type="Rhea" id="RHEA:10164"/>
        <dbReference type="ChEBI" id="CHEBI:15377"/>
        <dbReference type="ChEBI" id="CHEBI:58289"/>
        <dbReference type="ChEBI" id="CHEBI:58702"/>
        <dbReference type="EC" id="4.2.1.11"/>
    </reaction>
</comment>
<comment type="cofactor">
    <cofactor evidence="1">
        <name>Mg(2+)</name>
        <dbReference type="ChEBI" id="CHEBI:18420"/>
    </cofactor>
    <text evidence="1">Binds a second Mg(2+) ion via substrate during catalysis.</text>
</comment>
<comment type="pathway">
    <text evidence="1">Carbohydrate degradation; glycolysis; pyruvate from D-glyceraldehyde 3-phosphate: step 4/5.</text>
</comment>
<comment type="subcellular location">
    <subcellularLocation>
        <location evidence="1">Cytoplasm</location>
    </subcellularLocation>
    <subcellularLocation>
        <location evidence="1">Secreted</location>
    </subcellularLocation>
    <subcellularLocation>
        <location evidence="1">Cell surface</location>
    </subcellularLocation>
    <text evidence="1">Fractions of enolase are present in both the cytoplasm and on the cell surface.</text>
</comment>
<comment type="similarity">
    <text evidence="1">Belongs to the enolase family.</text>
</comment>
<protein>
    <recommendedName>
        <fullName evidence="1">Enolase</fullName>
        <ecNumber evidence="1">4.2.1.11</ecNumber>
    </recommendedName>
    <alternativeName>
        <fullName evidence="1">2-phospho-D-glycerate hydro-lyase</fullName>
    </alternativeName>
    <alternativeName>
        <fullName evidence="1">2-phosphoglycerate dehydratase</fullName>
    </alternativeName>
</protein>
<name>ENO_RHOPB</name>
<organism>
    <name type="scientific">Rhodopseudomonas palustris (strain BisB18)</name>
    <dbReference type="NCBI Taxonomy" id="316056"/>
    <lineage>
        <taxon>Bacteria</taxon>
        <taxon>Pseudomonadati</taxon>
        <taxon>Pseudomonadota</taxon>
        <taxon>Alphaproteobacteria</taxon>
        <taxon>Hyphomicrobiales</taxon>
        <taxon>Nitrobacteraceae</taxon>
        <taxon>Rhodopseudomonas</taxon>
    </lineage>
</organism>